<comment type="function">
    <text evidence="1">Bifunctional enzyme that catalyzes the enolization of 2,3-diketo-5-methylthiopentyl-1-phosphate (DK-MTP-1-P) into the intermediate 2-hydroxy-3-keto-5-methylthiopentenyl-1-phosphate (HK-MTPenyl-1-P), which is then dephosphorylated to form the acireductone 1,2-dihydroxy-3-keto-5-methylthiopentene (DHK-MTPene).</text>
</comment>
<comment type="catalytic activity">
    <reaction evidence="1">
        <text>5-methylsulfanyl-2,3-dioxopentyl phosphate + H2O = 1,2-dihydroxy-5-(methylsulfanyl)pent-1-en-3-one + phosphate</text>
        <dbReference type="Rhea" id="RHEA:21700"/>
        <dbReference type="ChEBI" id="CHEBI:15377"/>
        <dbReference type="ChEBI" id="CHEBI:43474"/>
        <dbReference type="ChEBI" id="CHEBI:49252"/>
        <dbReference type="ChEBI" id="CHEBI:58828"/>
        <dbReference type="EC" id="3.1.3.77"/>
    </reaction>
</comment>
<comment type="cofactor">
    <cofactor evidence="1">
        <name>Mg(2+)</name>
        <dbReference type="ChEBI" id="CHEBI:18420"/>
    </cofactor>
    <text evidence="1">Binds 1 Mg(2+) ion per subunit.</text>
</comment>
<comment type="pathway">
    <text evidence="1">Amino-acid biosynthesis; L-methionine biosynthesis via salvage pathway; L-methionine from S-methyl-5-thio-alpha-D-ribose 1-phosphate: step 3/6.</text>
</comment>
<comment type="pathway">
    <text evidence="1">Amino-acid biosynthesis; L-methionine biosynthesis via salvage pathway; L-methionine from S-methyl-5-thio-alpha-D-ribose 1-phosphate: step 4/6.</text>
</comment>
<comment type="subunit">
    <text evidence="1">Monomer.</text>
</comment>
<comment type="similarity">
    <text evidence="1">Belongs to the HAD-like hydrolase superfamily. MasA/MtnC family.</text>
</comment>
<sequence>MGIRAIVVDTAGTTTDLNFIQDVLFPYSVKALPDFLEQNQHNVLVENCICDTRDIALEPDADLARVTEILQQWVSEDRKATPLKTLQGLIWKQGYAHGEFKGHIFPDFIEAVKRFSAQNLRIYSFSSGSVDAQKLLFSHSDGGDLTEMFNGHFDTRTGNKLDKQAYCNILNTISLSPKQVLFVSDVIEELKAAEAAGMMTCQMVRDSTLRTGEFRKISSFDELLIE</sequence>
<gene>
    <name evidence="1" type="primary">mtnC</name>
    <name type="ordered locus">Sbal_4264</name>
</gene>
<dbReference type="EC" id="3.1.3.77" evidence="1"/>
<dbReference type="EMBL" id="CP000563">
    <property type="protein sequence ID" value="ABN63729.1"/>
    <property type="molecule type" value="Genomic_DNA"/>
</dbReference>
<dbReference type="RefSeq" id="WP_011848223.1">
    <property type="nucleotide sequence ID" value="NC_009052.1"/>
</dbReference>
<dbReference type="SMR" id="A3DAG6"/>
<dbReference type="STRING" id="325240.Sbal_4264"/>
<dbReference type="KEGG" id="sbl:Sbal_4264"/>
<dbReference type="HOGENOM" id="CLU_023273_0_0_6"/>
<dbReference type="OrthoDB" id="9797416at2"/>
<dbReference type="UniPathway" id="UPA00904">
    <property type="reaction ID" value="UER00876"/>
</dbReference>
<dbReference type="UniPathway" id="UPA00904">
    <property type="reaction ID" value="UER00877"/>
</dbReference>
<dbReference type="Proteomes" id="UP000001557">
    <property type="component" value="Chromosome"/>
</dbReference>
<dbReference type="GO" id="GO:0043715">
    <property type="term" value="F:2,3-diketo-5-methylthiopentyl-1-phosphate enolase activity"/>
    <property type="evidence" value="ECO:0007669"/>
    <property type="project" value="UniProtKB-UniRule"/>
</dbReference>
<dbReference type="GO" id="GO:0043716">
    <property type="term" value="F:2-hydroxy-3-keto-5-methylthiopentenyl-1-phosphate phosphatase activity"/>
    <property type="evidence" value="ECO:0007669"/>
    <property type="project" value="UniProtKB-UniRule"/>
</dbReference>
<dbReference type="GO" id="GO:0043874">
    <property type="term" value="F:acireductone synthase activity"/>
    <property type="evidence" value="ECO:0007669"/>
    <property type="project" value="UniProtKB-EC"/>
</dbReference>
<dbReference type="GO" id="GO:0000287">
    <property type="term" value="F:magnesium ion binding"/>
    <property type="evidence" value="ECO:0007669"/>
    <property type="project" value="UniProtKB-UniRule"/>
</dbReference>
<dbReference type="GO" id="GO:0019509">
    <property type="term" value="P:L-methionine salvage from methylthioadenosine"/>
    <property type="evidence" value="ECO:0007669"/>
    <property type="project" value="UniProtKB-UniRule"/>
</dbReference>
<dbReference type="CDD" id="cd01629">
    <property type="entry name" value="HAD_EP"/>
    <property type="match status" value="1"/>
</dbReference>
<dbReference type="FunFam" id="1.10.720.60:FF:000008">
    <property type="entry name" value="Enolase-phosphatase E1"/>
    <property type="match status" value="1"/>
</dbReference>
<dbReference type="Gene3D" id="1.10.720.60">
    <property type="match status" value="1"/>
</dbReference>
<dbReference type="Gene3D" id="3.40.50.1000">
    <property type="entry name" value="HAD superfamily/HAD-like"/>
    <property type="match status" value="1"/>
</dbReference>
<dbReference type="HAMAP" id="MF_01681">
    <property type="entry name" value="Salvage_MtnC"/>
    <property type="match status" value="1"/>
</dbReference>
<dbReference type="InterPro" id="IPR023943">
    <property type="entry name" value="Enolase-ppase_E1"/>
</dbReference>
<dbReference type="InterPro" id="IPR036412">
    <property type="entry name" value="HAD-like_sf"/>
</dbReference>
<dbReference type="InterPro" id="IPR006439">
    <property type="entry name" value="HAD-SF_hydro_IA"/>
</dbReference>
<dbReference type="InterPro" id="IPR023214">
    <property type="entry name" value="HAD_sf"/>
</dbReference>
<dbReference type="NCBIfam" id="TIGR01691">
    <property type="entry name" value="enolase-ppase"/>
    <property type="match status" value="1"/>
</dbReference>
<dbReference type="NCBIfam" id="TIGR01549">
    <property type="entry name" value="HAD-SF-IA-v1"/>
    <property type="match status" value="1"/>
</dbReference>
<dbReference type="PANTHER" id="PTHR20371">
    <property type="entry name" value="ENOLASE-PHOSPHATASE E1"/>
    <property type="match status" value="1"/>
</dbReference>
<dbReference type="PANTHER" id="PTHR20371:SF1">
    <property type="entry name" value="ENOLASE-PHOSPHATASE E1"/>
    <property type="match status" value="1"/>
</dbReference>
<dbReference type="Pfam" id="PF00702">
    <property type="entry name" value="Hydrolase"/>
    <property type="match status" value="1"/>
</dbReference>
<dbReference type="PRINTS" id="PR00413">
    <property type="entry name" value="HADHALOGNASE"/>
</dbReference>
<dbReference type="SFLD" id="SFLDG01129">
    <property type="entry name" value="C1.5:_HAD__Beta-PGM__Phosphata"/>
    <property type="match status" value="1"/>
</dbReference>
<dbReference type="SFLD" id="SFLDF00044">
    <property type="entry name" value="enolase-phosphatase"/>
    <property type="match status" value="1"/>
</dbReference>
<dbReference type="SUPFAM" id="SSF56784">
    <property type="entry name" value="HAD-like"/>
    <property type="match status" value="1"/>
</dbReference>
<organism>
    <name type="scientific">Shewanella baltica (strain OS155 / ATCC BAA-1091)</name>
    <dbReference type="NCBI Taxonomy" id="325240"/>
    <lineage>
        <taxon>Bacteria</taxon>
        <taxon>Pseudomonadati</taxon>
        <taxon>Pseudomonadota</taxon>
        <taxon>Gammaproteobacteria</taxon>
        <taxon>Alteromonadales</taxon>
        <taxon>Shewanellaceae</taxon>
        <taxon>Shewanella</taxon>
    </lineage>
</organism>
<accession>A3DAG6</accession>
<proteinExistence type="inferred from homology"/>
<protein>
    <recommendedName>
        <fullName evidence="1">Enolase-phosphatase E1</fullName>
        <ecNumber evidence="1">3.1.3.77</ecNumber>
    </recommendedName>
    <alternativeName>
        <fullName evidence="1">2,3-diketo-5-methylthio-1-phosphopentane phosphatase</fullName>
    </alternativeName>
</protein>
<name>MTNC_SHEB5</name>
<feature type="chain" id="PRO_0000357397" description="Enolase-phosphatase E1">
    <location>
        <begin position="1"/>
        <end position="226"/>
    </location>
</feature>
<evidence type="ECO:0000255" key="1">
    <source>
        <dbReference type="HAMAP-Rule" id="MF_01681"/>
    </source>
</evidence>
<keyword id="KW-0028">Amino-acid biosynthesis</keyword>
<keyword id="KW-0378">Hydrolase</keyword>
<keyword id="KW-0460">Magnesium</keyword>
<keyword id="KW-0479">Metal-binding</keyword>
<keyword id="KW-0486">Methionine biosynthesis</keyword>
<keyword id="KW-1185">Reference proteome</keyword>
<reference key="1">
    <citation type="submission" date="2007-02" db="EMBL/GenBank/DDBJ databases">
        <title>Complete sequence of chromosome of Shewanella baltica OS155.</title>
        <authorList>
            <consortium name="US DOE Joint Genome Institute"/>
            <person name="Copeland A."/>
            <person name="Lucas S."/>
            <person name="Lapidus A."/>
            <person name="Barry K."/>
            <person name="Detter J.C."/>
            <person name="Glavina del Rio T."/>
            <person name="Hammon N."/>
            <person name="Israni S."/>
            <person name="Dalin E."/>
            <person name="Tice H."/>
            <person name="Pitluck S."/>
            <person name="Sims D.R."/>
            <person name="Brettin T."/>
            <person name="Bruce D."/>
            <person name="Han C."/>
            <person name="Tapia R."/>
            <person name="Brainard J."/>
            <person name="Schmutz J."/>
            <person name="Larimer F."/>
            <person name="Land M."/>
            <person name="Hauser L."/>
            <person name="Kyrpides N."/>
            <person name="Mikhailova N."/>
            <person name="Brettar I."/>
            <person name="Klappenbach J."/>
            <person name="Konstantinidis K."/>
            <person name="Rodrigues J."/>
            <person name="Tiedje J."/>
            <person name="Richardson P."/>
        </authorList>
    </citation>
    <scope>NUCLEOTIDE SEQUENCE [LARGE SCALE GENOMIC DNA]</scope>
    <source>
        <strain>OS155 / ATCC BAA-1091</strain>
    </source>
</reference>